<protein>
    <recommendedName>
        <fullName evidence="1">Large ribosomal subunit protein uL4</fullName>
    </recommendedName>
    <alternativeName>
        <fullName evidence="3">50S ribosomal protein L4</fullName>
    </alternativeName>
</protein>
<comment type="function">
    <text evidence="1">One of the primary rRNA binding proteins, this protein initially binds near the 5'-end of the 23S rRNA. It is important during the early stages of 50S assembly. It makes multiple contacts with different domains of the 23S rRNA in the assembled 50S subunit and ribosome.</text>
</comment>
<comment type="function">
    <text evidence="1">Forms part of the polypeptide exit tunnel.</text>
</comment>
<comment type="subunit">
    <text evidence="1">Part of the 50S ribosomal subunit.</text>
</comment>
<comment type="similarity">
    <text evidence="1">Belongs to the universal ribosomal protein uL4 family.</text>
</comment>
<dbReference type="EMBL" id="AF036708">
    <property type="protein sequence ID" value="AAB95388.1"/>
    <property type="molecule type" value="Genomic_DNA"/>
</dbReference>
<dbReference type="EMBL" id="AE015450">
    <property type="protein sequence ID" value="AAP56402.2"/>
    <property type="molecule type" value="Genomic_DNA"/>
</dbReference>
<dbReference type="RefSeq" id="WP_011113281.1">
    <property type="nucleotide sequence ID" value="NC_004829.2"/>
</dbReference>
<dbReference type="SMR" id="O52333"/>
<dbReference type="GeneID" id="93509870"/>
<dbReference type="KEGG" id="mga:MGA_0710"/>
<dbReference type="PATRIC" id="fig|233150.7.peg.56"/>
<dbReference type="HOGENOM" id="CLU_041575_5_2_14"/>
<dbReference type="OrthoDB" id="9803201at2"/>
<dbReference type="Proteomes" id="UP000001418">
    <property type="component" value="Chromosome"/>
</dbReference>
<dbReference type="GO" id="GO:1990904">
    <property type="term" value="C:ribonucleoprotein complex"/>
    <property type="evidence" value="ECO:0007669"/>
    <property type="project" value="UniProtKB-KW"/>
</dbReference>
<dbReference type="GO" id="GO:0005840">
    <property type="term" value="C:ribosome"/>
    <property type="evidence" value="ECO:0007669"/>
    <property type="project" value="UniProtKB-KW"/>
</dbReference>
<dbReference type="GO" id="GO:0019843">
    <property type="term" value="F:rRNA binding"/>
    <property type="evidence" value="ECO:0007669"/>
    <property type="project" value="UniProtKB-UniRule"/>
</dbReference>
<dbReference type="GO" id="GO:0003735">
    <property type="term" value="F:structural constituent of ribosome"/>
    <property type="evidence" value="ECO:0007669"/>
    <property type="project" value="InterPro"/>
</dbReference>
<dbReference type="GO" id="GO:0006412">
    <property type="term" value="P:translation"/>
    <property type="evidence" value="ECO:0007669"/>
    <property type="project" value="UniProtKB-UniRule"/>
</dbReference>
<dbReference type="Gene3D" id="3.40.1370.10">
    <property type="match status" value="1"/>
</dbReference>
<dbReference type="HAMAP" id="MF_01328_B">
    <property type="entry name" value="Ribosomal_uL4_B"/>
    <property type="match status" value="1"/>
</dbReference>
<dbReference type="InterPro" id="IPR002136">
    <property type="entry name" value="Ribosomal_uL4"/>
</dbReference>
<dbReference type="InterPro" id="IPR013005">
    <property type="entry name" value="Ribosomal_uL4-like"/>
</dbReference>
<dbReference type="InterPro" id="IPR023574">
    <property type="entry name" value="Ribosomal_uL4_dom_sf"/>
</dbReference>
<dbReference type="NCBIfam" id="TIGR03953">
    <property type="entry name" value="rplD_bact"/>
    <property type="match status" value="1"/>
</dbReference>
<dbReference type="PANTHER" id="PTHR10746">
    <property type="entry name" value="50S RIBOSOMAL PROTEIN L4"/>
    <property type="match status" value="1"/>
</dbReference>
<dbReference type="PANTHER" id="PTHR10746:SF6">
    <property type="entry name" value="LARGE RIBOSOMAL SUBUNIT PROTEIN UL4M"/>
    <property type="match status" value="1"/>
</dbReference>
<dbReference type="Pfam" id="PF00573">
    <property type="entry name" value="Ribosomal_L4"/>
    <property type="match status" value="1"/>
</dbReference>
<dbReference type="SUPFAM" id="SSF52166">
    <property type="entry name" value="Ribosomal protein L4"/>
    <property type="match status" value="1"/>
</dbReference>
<accession>O52333</accession>
<reference key="1">
    <citation type="journal article" date="2000" name="Mol. Biol. (Mosk.)">
        <title>Determination and analysis of the nucleotide sequence of a segment of a Mycoplasma gallisepticum strain A5969 chromosome, containing operons S10 and rrn23-5.</title>
        <authorList>
            <person name="Skamrov A.V."/>
            <person name="Gol'dman M.A."/>
            <person name="Feoktistova E.S."/>
            <person name="Bibilashvili R.S."/>
        </authorList>
    </citation>
    <scope>NUCLEOTIDE SEQUENCE [GENOMIC DNA]</scope>
    <source>
        <strain>A5969Var.B</strain>
    </source>
</reference>
<reference key="2">
    <citation type="journal article" date="2003" name="Microbiology">
        <title>The complete genome sequence of the avian pathogen Mycoplasma gallisepticum strain R(low).</title>
        <authorList>
            <person name="Papazisi L."/>
            <person name="Gorton T.S."/>
            <person name="Kutish G."/>
            <person name="Markham P.F."/>
            <person name="Browning G.F."/>
            <person name="Nguyen D.K."/>
            <person name="Swartzell S."/>
            <person name="Madan A."/>
            <person name="Mahairas G."/>
            <person name="Geary S.J."/>
        </authorList>
    </citation>
    <scope>NUCLEOTIDE SEQUENCE [LARGE SCALE GENOMIC DNA]</scope>
    <source>
        <strain>R(low / passage 15 / clone 2)</strain>
    </source>
</reference>
<evidence type="ECO:0000255" key="1">
    <source>
        <dbReference type="HAMAP-Rule" id="MF_01328"/>
    </source>
</evidence>
<evidence type="ECO:0000256" key="2">
    <source>
        <dbReference type="SAM" id="MobiDB-lite"/>
    </source>
</evidence>
<evidence type="ECO:0000305" key="3"/>
<sequence>MSKIKLFDLSGKVQEEIELNQKLLVSEVHKQAIFDAILAENLSQIQGTHSTLKKGEVSGGGKKPYQQKHTGRARQGSIRNPHYVGGGIAFGPKPNRNYKIKVNKKVSSLAFKSAITSKVNNNEFLGLVDSIKQDKPSTKAIAKLLKELKVNKKVLIVAFEKNENLEKSSANLPNVSYKLWNQVSVKDLIDANCVLAQKSAINNWVERLN</sequence>
<gene>
    <name evidence="1" type="primary">rplD</name>
    <name evidence="1" type="synonym">rpl4</name>
    <name type="ordered locus">MYCGA0520</name>
    <name type="ORF">MGA_0710</name>
</gene>
<organism>
    <name type="scientific">Mycoplasmoides gallisepticum (strain R(low / passage 15 / clone 2))</name>
    <name type="common">Mycoplasma gallisepticum</name>
    <dbReference type="NCBI Taxonomy" id="710127"/>
    <lineage>
        <taxon>Bacteria</taxon>
        <taxon>Bacillati</taxon>
        <taxon>Mycoplasmatota</taxon>
        <taxon>Mycoplasmoidales</taxon>
        <taxon>Mycoplasmoidaceae</taxon>
        <taxon>Mycoplasmoides</taxon>
    </lineage>
</organism>
<keyword id="KW-1185">Reference proteome</keyword>
<keyword id="KW-0687">Ribonucleoprotein</keyword>
<keyword id="KW-0689">Ribosomal protein</keyword>
<keyword id="KW-0694">RNA-binding</keyword>
<keyword id="KW-0699">rRNA-binding</keyword>
<name>RL4_MYCGA</name>
<feature type="chain" id="PRO_0000129238" description="Large ribosomal subunit protein uL4">
    <location>
        <begin position="1"/>
        <end position="209"/>
    </location>
</feature>
<feature type="region of interest" description="Disordered" evidence="2">
    <location>
        <begin position="50"/>
        <end position="78"/>
    </location>
</feature>
<proteinExistence type="inferred from homology"/>